<accession>B3A0E6</accession>
<keyword id="KW-0027">Amidation</keyword>
<keyword id="KW-0903">Direct protein sequencing</keyword>
<keyword id="KW-0527">Neuropeptide</keyword>
<keyword id="KW-0964">Secreted</keyword>
<evidence type="ECO:0000250" key="1">
    <source>
        <dbReference type="UniProtKB" id="P34405"/>
    </source>
</evidence>
<evidence type="ECO:0000255" key="2"/>
<evidence type="ECO:0000269" key="3">
    <source>
    </source>
</evidence>
<evidence type="ECO:0000303" key="4">
    <source>
    </source>
</evidence>
<evidence type="ECO:0000305" key="5"/>
<evidence type="ECO:0000305" key="6">
    <source>
    </source>
</evidence>
<sequence>GRGGASNYVRL</sequence>
<name>FAR9_AUSGA</name>
<comment type="function">
    <text evidence="1">FMRFamides and FMRFamide-like peptides are neuropeptides.</text>
</comment>
<comment type="subcellular location">
    <subcellularLocation>
        <location evidence="6">Secreted</location>
    </subcellularLocation>
</comment>
<comment type="similarity">
    <text evidence="2">Belongs to the FARP (FMRF amide related peptide) family.</text>
</comment>
<protein>
    <recommendedName>
        <fullName evidence="4">Extended FMRFamide-9</fullName>
        <shortName evidence="4">FMRFa-9</shortName>
    </recommendedName>
</protein>
<dbReference type="GO" id="GO:0005576">
    <property type="term" value="C:extracellular region"/>
    <property type="evidence" value="ECO:0007669"/>
    <property type="project" value="UniProtKB-SubCell"/>
</dbReference>
<dbReference type="GO" id="GO:0007218">
    <property type="term" value="P:neuropeptide signaling pathway"/>
    <property type="evidence" value="ECO:0007669"/>
    <property type="project" value="UniProtKB-KW"/>
</dbReference>
<proteinExistence type="evidence at protein level"/>
<organism>
    <name type="scientific">Austrophasma gansbaaiense</name>
    <name type="common">Gladiator</name>
    <name type="synonym">Heel-walker</name>
    <dbReference type="NCBI Taxonomy" id="253136"/>
    <lineage>
        <taxon>Eukaryota</taxon>
        <taxon>Metazoa</taxon>
        <taxon>Ecdysozoa</taxon>
        <taxon>Arthropoda</taxon>
        <taxon>Hexapoda</taxon>
        <taxon>Insecta</taxon>
        <taxon>Pterygota</taxon>
        <taxon>Neoptera</taxon>
        <taxon>Polyneoptera</taxon>
        <taxon>Mantophasmatodea</taxon>
        <taxon>Austrophasmatidae</taxon>
        <taxon>Austrophasma</taxon>
    </lineage>
</organism>
<feature type="peptide" id="PRO_0000421538" description="Extended FMRFamide-9" evidence="3">
    <location>
        <begin position="1"/>
        <end position="11"/>
    </location>
</feature>
<feature type="modified residue" description="Leucine amide" evidence="3">
    <location>
        <position position="11"/>
    </location>
</feature>
<feature type="unsure residue" description="L or I" evidence="3">
    <location>
        <position position="11"/>
    </location>
</feature>
<reference evidence="5" key="1">
    <citation type="journal article" date="2012" name="Syst. Biol.">
        <title>Peptidomics-based phylogeny and biogeography of Mantophasmatodea (Hexapoda).</title>
        <authorList>
            <person name="Predel R."/>
            <person name="Neupert S."/>
            <person name="Huetteroth W."/>
            <person name="Kahnt J."/>
            <person name="Waidelich D."/>
            <person name="Roth S."/>
        </authorList>
    </citation>
    <scope>PROTEIN SEQUENCE</scope>
    <scope>AMIDATION AT LEU-11</scope>
    <source>
        <tissue evidence="3">Thoracic perisympathetic organs</tissue>
    </source>
</reference>